<evidence type="ECO:0000255" key="1">
    <source>
        <dbReference type="HAMAP-Rule" id="MF_03148"/>
    </source>
</evidence>
<feature type="chain" id="PRO_0000413108" description="Inosine triphosphate pyrophosphatase">
    <location>
        <begin position="1"/>
        <end position="190"/>
    </location>
</feature>
<feature type="binding site" evidence="1">
    <location>
        <begin position="10"/>
        <end position="15"/>
    </location>
    <ligand>
        <name>ITP</name>
        <dbReference type="ChEBI" id="CHEBI:61402"/>
    </ligand>
</feature>
<feature type="binding site" evidence="1">
    <location>
        <position position="40"/>
    </location>
    <ligand>
        <name>Mg(2+)</name>
        <dbReference type="ChEBI" id="CHEBI:18420"/>
    </ligand>
</feature>
<feature type="binding site" evidence="1">
    <location>
        <position position="52"/>
    </location>
    <ligand>
        <name>ITP</name>
        <dbReference type="ChEBI" id="CHEBI:61402"/>
    </ligand>
</feature>
<feature type="binding site" evidence="1">
    <location>
        <begin position="68"/>
        <end position="69"/>
    </location>
    <ligand>
        <name>ITP</name>
        <dbReference type="ChEBI" id="CHEBI:61402"/>
    </ligand>
</feature>
<feature type="binding site" evidence="1">
    <location>
        <position position="85"/>
    </location>
    <ligand>
        <name>ITP</name>
        <dbReference type="ChEBI" id="CHEBI:61402"/>
    </ligand>
</feature>
<feature type="binding site" evidence="1">
    <location>
        <begin position="144"/>
        <end position="147"/>
    </location>
    <ligand>
        <name>ITP</name>
        <dbReference type="ChEBI" id="CHEBI:61402"/>
    </ligand>
</feature>
<feature type="binding site" evidence="1">
    <location>
        <position position="167"/>
    </location>
    <ligand>
        <name>ITP</name>
        <dbReference type="ChEBI" id="CHEBI:61402"/>
    </ligand>
</feature>
<feature type="binding site" evidence="1">
    <location>
        <begin position="172"/>
        <end position="173"/>
    </location>
    <ligand>
        <name>ITP</name>
        <dbReference type="ChEBI" id="CHEBI:61402"/>
    </ligand>
</feature>
<keyword id="KW-0963">Cytoplasm</keyword>
<keyword id="KW-0378">Hydrolase</keyword>
<keyword id="KW-0460">Magnesium</keyword>
<keyword id="KW-0464">Manganese</keyword>
<keyword id="KW-0479">Metal-binding</keyword>
<keyword id="KW-0546">Nucleotide metabolism</keyword>
<keyword id="KW-0547">Nucleotide-binding</keyword>
<keyword id="KW-1185">Reference proteome</keyword>
<name>ITPA_CULQU</name>
<protein>
    <recommendedName>
        <fullName evidence="1">Inosine triphosphate pyrophosphatase</fullName>
        <shortName evidence="1">ITPase</shortName>
        <shortName evidence="1">Inosine triphosphatase</shortName>
        <ecNumber evidence="1">3.6.1.66</ecNumber>
    </recommendedName>
    <alternativeName>
        <fullName evidence="1">Non-canonical purine NTP pyrophosphatase</fullName>
    </alternativeName>
    <alternativeName>
        <fullName evidence="1">Non-standard purine NTP pyrophosphatase</fullName>
    </alternativeName>
    <alternativeName>
        <fullName evidence="1">Nucleoside-triphosphate diphosphatase</fullName>
    </alternativeName>
    <alternativeName>
        <fullName evidence="1">Nucleoside-triphosphate pyrophosphatase</fullName>
        <shortName evidence="1">NTPase</shortName>
    </alternativeName>
    <alternativeName>
        <fullName evidence="1">XTP/dITP diphosphatase</fullName>
    </alternativeName>
</protein>
<proteinExistence type="inferred from homology"/>
<gene>
    <name type="ORF">CPIJ019949</name>
</gene>
<reference key="1">
    <citation type="submission" date="2007-03" db="EMBL/GenBank/DDBJ databases">
        <title>Annotation of Culex pipiens quinquefasciatus.</title>
        <authorList>
            <consortium name="The Broad Institute Genome Sequencing Platform"/>
            <person name="Atkinson P.W."/>
            <person name="Hemingway J."/>
            <person name="Christensen B.M."/>
            <person name="Higgs S."/>
            <person name="Kodira C.D."/>
            <person name="Hannick L.I."/>
            <person name="Megy K."/>
            <person name="O'Leary S.B."/>
            <person name="Pearson M."/>
            <person name="Haas B.J."/>
            <person name="Mauceli E."/>
            <person name="Wortman J.R."/>
            <person name="Lee N.H."/>
            <person name="Guigo R."/>
            <person name="Stanke M."/>
            <person name="Alvarado L."/>
            <person name="Amedeo P."/>
            <person name="Antoine C.H."/>
            <person name="Arensburger P."/>
            <person name="Bidwell S.L."/>
            <person name="Crawford M."/>
            <person name="Camaro F."/>
            <person name="Devon K."/>
            <person name="Engels R."/>
            <person name="Hammond M."/>
            <person name="Howarth C."/>
            <person name="Koehrsen M."/>
            <person name="Lawson D."/>
            <person name="Montgomery P."/>
            <person name="Nene V."/>
            <person name="Nusbaum C."/>
            <person name="Puiu D."/>
            <person name="Romero-Severson J."/>
            <person name="Severson D.W."/>
            <person name="Shumway M."/>
            <person name="Sisk P."/>
            <person name="Stolte C."/>
            <person name="Zeng Q."/>
            <person name="Eisenstadt E."/>
            <person name="Fraser-Liggett C.M."/>
            <person name="Strausberg R."/>
            <person name="Galagan J."/>
            <person name="Birren B."/>
            <person name="Collins F.H."/>
        </authorList>
    </citation>
    <scope>NUCLEOTIDE SEQUENCE [LARGE SCALE GENOMIC DNA]</scope>
    <source>
        <strain>JHB</strain>
    </source>
</reference>
<comment type="function">
    <text evidence="1">Pyrophosphatase that hydrolyzes non-canonical purine nucleotides such as inosine triphosphate (ITP), deoxyinosine triphosphate (dITP) or xanthosine 5'-triphosphate (XTP) to their respective monophosphate derivatives. The enzyme does not distinguish between the deoxy- and ribose forms. Probably excludes non-canonical purines from RNA and DNA precursor pools, thus preventing their incorporation into RNA and DNA and avoiding chromosomal lesions.</text>
</comment>
<comment type="catalytic activity">
    <reaction evidence="1">
        <text>ITP + H2O = IMP + diphosphate + H(+)</text>
        <dbReference type="Rhea" id="RHEA:29399"/>
        <dbReference type="ChEBI" id="CHEBI:15377"/>
        <dbReference type="ChEBI" id="CHEBI:15378"/>
        <dbReference type="ChEBI" id="CHEBI:33019"/>
        <dbReference type="ChEBI" id="CHEBI:58053"/>
        <dbReference type="ChEBI" id="CHEBI:61402"/>
        <dbReference type="EC" id="3.6.1.66"/>
    </reaction>
    <physiologicalReaction direction="left-to-right" evidence="1">
        <dbReference type="Rhea" id="RHEA:29400"/>
    </physiologicalReaction>
</comment>
<comment type="catalytic activity">
    <reaction evidence="1">
        <text>dITP + H2O = dIMP + diphosphate + H(+)</text>
        <dbReference type="Rhea" id="RHEA:28342"/>
        <dbReference type="ChEBI" id="CHEBI:15377"/>
        <dbReference type="ChEBI" id="CHEBI:15378"/>
        <dbReference type="ChEBI" id="CHEBI:33019"/>
        <dbReference type="ChEBI" id="CHEBI:61194"/>
        <dbReference type="ChEBI" id="CHEBI:61382"/>
        <dbReference type="EC" id="3.6.1.66"/>
    </reaction>
    <physiologicalReaction direction="left-to-right" evidence="1">
        <dbReference type="Rhea" id="RHEA:28343"/>
    </physiologicalReaction>
</comment>
<comment type="catalytic activity">
    <reaction evidence="1">
        <text>XTP + H2O = XMP + diphosphate + H(+)</text>
        <dbReference type="Rhea" id="RHEA:28610"/>
        <dbReference type="ChEBI" id="CHEBI:15377"/>
        <dbReference type="ChEBI" id="CHEBI:15378"/>
        <dbReference type="ChEBI" id="CHEBI:33019"/>
        <dbReference type="ChEBI" id="CHEBI:57464"/>
        <dbReference type="ChEBI" id="CHEBI:61314"/>
        <dbReference type="EC" id="3.6.1.66"/>
    </reaction>
    <physiologicalReaction direction="left-to-right" evidence="1">
        <dbReference type="Rhea" id="RHEA:28611"/>
    </physiologicalReaction>
</comment>
<comment type="cofactor">
    <cofactor evidence="1">
        <name>Mg(2+)</name>
        <dbReference type="ChEBI" id="CHEBI:18420"/>
    </cofactor>
    <cofactor evidence="1">
        <name>Mn(2+)</name>
        <dbReference type="ChEBI" id="CHEBI:29035"/>
    </cofactor>
    <text evidence="1">Binds 1 divalent metal cation per subunit; can use either Mg(2+) or Mn(2+).</text>
</comment>
<comment type="subunit">
    <text evidence="1">Homodimer.</text>
</comment>
<comment type="subcellular location">
    <subcellularLocation>
        <location evidence="1">Cytoplasm</location>
    </subcellularLocation>
</comment>
<comment type="similarity">
    <text evidence="1">Belongs to the HAM1 NTPase family.</text>
</comment>
<accession>B0XL39</accession>
<dbReference type="EC" id="3.6.1.66" evidence="1"/>
<dbReference type="EMBL" id="DS234228">
    <property type="protein sequence ID" value="EDS33297.1"/>
    <property type="molecule type" value="Genomic_DNA"/>
</dbReference>
<dbReference type="RefSeq" id="XP_001870361.1">
    <property type="nucleotide sequence ID" value="XM_001870326.1"/>
</dbReference>
<dbReference type="SMR" id="B0XL39"/>
<dbReference type="FunCoup" id="B0XL39">
    <property type="interactions" value="1524"/>
</dbReference>
<dbReference type="STRING" id="7176.B0XL39"/>
<dbReference type="EnsemblMetazoa" id="CPIJ019949-RA">
    <property type="protein sequence ID" value="CPIJ019949-PA"/>
    <property type="gene ID" value="CPIJ019949"/>
</dbReference>
<dbReference type="KEGG" id="cqu:CpipJ_CPIJ019949"/>
<dbReference type="VEuPathDB" id="VectorBase:CPIJ019949"/>
<dbReference type="VEuPathDB" id="VectorBase:CQUJHB014038"/>
<dbReference type="eggNOG" id="KOG3222">
    <property type="taxonomic scope" value="Eukaryota"/>
</dbReference>
<dbReference type="HOGENOM" id="CLU_082080_1_1_1"/>
<dbReference type="InParanoid" id="B0XL39"/>
<dbReference type="OMA" id="YDPIFQP"/>
<dbReference type="OrthoDB" id="6288734at2759"/>
<dbReference type="PhylomeDB" id="B0XL39"/>
<dbReference type="Proteomes" id="UP000002320">
    <property type="component" value="Unassembled WGS sequence"/>
</dbReference>
<dbReference type="GO" id="GO:0005737">
    <property type="term" value="C:cytoplasm"/>
    <property type="evidence" value="ECO:0007669"/>
    <property type="project" value="UniProtKB-SubCell"/>
</dbReference>
<dbReference type="GO" id="GO:0035870">
    <property type="term" value="F:dITP diphosphatase activity"/>
    <property type="evidence" value="ECO:0007669"/>
    <property type="project" value="RHEA"/>
</dbReference>
<dbReference type="GO" id="GO:0036220">
    <property type="term" value="F:ITP diphosphatase activity"/>
    <property type="evidence" value="ECO:0007669"/>
    <property type="project" value="RHEA"/>
</dbReference>
<dbReference type="GO" id="GO:0046872">
    <property type="term" value="F:metal ion binding"/>
    <property type="evidence" value="ECO:0007669"/>
    <property type="project" value="UniProtKB-KW"/>
</dbReference>
<dbReference type="GO" id="GO:0000166">
    <property type="term" value="F:nucleotide binding"/>
    <property type="evidence" value="ECO:0007669"/>
    <property type="project" value="UniProtKB-KW"/>
</dbReference>
<dbReference type="GO" id="GO:0036222">
    <property type="term" value="F:XTP diphosphatase activity"/>
    <property type="evidence" value="ECO:0007669"/>
    <property type="project" value="RHEA"/>
</dbReference>
<dbReference type="GO" id="GO:0009204">
    <property type="term" value="P:deoxyribonucleoside triphosphate catabolic process"/>
    <property type="evidence" value="ECO:0007669"/>
    <property type="project" value="UniProtKB-UniRule"/>
</dbReference>
<dbReference type="GO" id="GO:0009117">
    <property type="term" value="P:nucleotide metabolic process"/>
    <property type="evidence" value="ECO:0007669"/>
    <property type="project" value="UniProtKB-KW"/>
</dbReference>
<dbReference type="CDD" id="cd00515">
    <property type="entry name" value="HAM1"/>
    <property type="match status" value="1"/>
</dbReference>
<dbReference type="FunFam" id="3.90.950.10:FF:000003">
    <property type="entry name" value="Inosine triphosphate pyrophosphatase"/>
    <property type="match status" value="1"/>
</dbReference>
<dbReference type="Gene3D" id="3.90.950.10">
    <property type="match status" value="1"/>
</dbReference>
<dbReference type="HAMAP" id="MF_03148">
    <property type="entry name" value="HAM1_NTPase"/>
    <property type="match status" value="1"/>
</dbReference>
<dbReference type="InterPro" id="IPR027502">
    <property type="entry name" value="ITPase"/>
</dbReference>
<dbReference type="InterPro" id="IPR029001">
    <property type="entry name" value="ITPase-like_fam"/>
</dbReference>
<dbReference type="InterPro" id="IPR002637">
    <property type="entry name" value="RdgB/HAM1"/>
</dbReference>
<dbReference type="NCBIfam" id="TIGR00042">
    <property type="entry name" value="RdgB/HAM1 family non-canonical purine NTP pyrophosphatase"/>
    <property type="match status" value="1"/>
</dbReference>
<dbReference type="PANTHER" id="PTHR11067:SF9">
    <property type="entry name" value="INOSINE TRIPHOSPHATE PYROPHOSPHATASE"/>
    <property type="match status" value="1"/>
</dbReference>
<dbReference type="PANTHER" id="PTHR11067">
    <property type="entry name" value="INOSINE TRIPHOSPHATE PYROPHOSPHATASE/HAM1 PROTEIN"/>
    <property type="match status" value="1"/>
</dbReference>
<dbReference type="Pfam" id="PF01725">
    <property type="entry name" value="Ham1p_like"/>
    <property type="match status" value="1"/>
</dbReference>
<dbReference type="SUPFAM" id="SSF52972">
    <property type="entry name" value="ITPase-like"/>
    <property type="match status" value="1"/>
</dbReference>
<sequence>MASRPISFVTGNAKKLEEVRAILGAAFPREIVAVKLDLPELQGEVDDICRKKCLEAARNVKGPVLVEDTCLCFNALKGLPGPYIKWFLEKLGPEGLHKLLDGWEDKSAQAVCTFAYAPDEQGEVLLFQGRTEGDIVFPRGSRDFGWDPIFQPKGYDKTYAELPKERKNEISHRFRALDKLREYFGGEGGK</sequence>
<organism>
    <name type="scientific">Culex quinquefasciatus</name>
    <name type="common">Southern house mosquito</name>
    <name type="synonym">Culex pungens</name>
    <dbReference type="NCBI Taxonomy" id="7176"/>
    <lineage>
        <taxon>Eukaryota</taxon>
        <taxon>Metazoa</taxon>
        <taxon>Ecdysozoa</taxon>
        <taxon>Arthropoda</taxon>
        <taxon>Hexapoda</taxon>
        <taxon>Insecta</taxon>
        <taxon>Pterygota</taxon>
        <taxon>Neoptera</taxon>
        <taxon>Endopterygota</taxon>
        <taxon>Diptera</taxon>
        <taxon>Nematocera</taxon>
        <taxon>Culicoidea</taxon>
        <taxon>Culicidae</taxon>
        <taxon>Culicinae</taxon>
        <taxon>Culicini</taxon>
        <taxon>Culex</taxon>
        <taxon>Culex</taxon>
    </lineage>
</organism>